<accession>Q2NXS1</accession>
<dbReference type="EMBL" id="AP008229">
    <property type="protein sequence ID" value="BAE70906.1"/>
    <property type="molecule type" value="Genomic_DNA"/>
</dbReference>
<dbReference type="RefSeq" id="WP_011409714.1">
    <property type="nucleotide sequence ID" value="NC_007705.1"/>
</dbReference>
<dbReference type="SMR" id="Q2NXS1"/>
<dbReference type="KEGG" id="xom:XOO4151"/>
<dbReference type="HOGENOM" id="CLU_086034_1_1_6"/>
<dbReference type="GO" id="GO:0033281">
    <property type="term" value="C:TAT protein transport complex"/>
    <property type="evidence" value="ECO:0007669"/>
    <property type="project" value="UniProtKB-UniRule"/>
</dbReference>
<dbReference type="GO" id="GO:0008320">
    <property type="term" value="F:protein transmembrane transporter activity"/>
    <property type="evidence" value="ECO:0007669"/>
    <property type="project" value="UniProtKB-UniRule"/>
</dbReference>
<dbReference type="GO" id="GO:0043953">
    <property type="term" value="P:protein transport by the Tat complex"/>
    <property type="evidence" value="ECO:0007669"/>
    <property type="project" value="UniProtKB-UniRule"/>
</dbReference>
<dbReference type="Gene3D" id="1.20.5.3310">
    <property type="match status" value="1"/>
</dbReference>
<dbReference type="HAMAP" id="MF_00237">
    <property type="entry name" value="TatB"/>
    <property type="match status" value="1"/>
</dbReference>
<dbReference type="InterPro" id="IPR003369">
    <property type="entry name" value="TatA/B/E"/>
</dbReference>
<dbReference type="InterPro" id="IPR018448">
    <property type="entry name" value="TatB"/>
</dbReference>
<dbReference type="NCBIfam" id="NF003400">
    <property type="entry name" value="PRK04654.1"/>
    <property type="match status" value="1"/>
</dbReference>
<dbReference type="NCBIfam" id="TIGR01410">
    <property type="entry name" value="tatB"/>
    <property type="match status" value="1"/>
</dbReference>
<dbReference type="PANTHER" id="PTHR33162">
    <property type="entry name" value="SEC-INDEPENDENT PROTEIN TRANSLOCASE PROTEIN TATA, CHLOROPLASTIC"/>
    <property type="match status" value="1"/>
</dbReference>
<dbReference type="PANTHER" id="PTHR33162:SF1">
    <property type="entry name" value="SEC-INDEPENDENT PROTEIN TRANSLOCASE PROTEIN TATA, CHLOROPLASTIC"/>
    <property type="match status" value="1"/>
</dbReference>
<dbReference type="Pfam" id="PF02416">
    <property type="entry name" value="TatA_B_E"/>
    <property type="match status" value="1"/>
</dbReference>
<dbReference type="PRINTS" id="PR01506">
    <property type="entry name" value="TATBPROTEIN"/>
</dbReference>
<name>TATB_XANOM</name>
<proteinExistence type="inferred from homology"/>
<sequence length="211" mass="22091">MFDIGVGELTLIAVVALVVLGPERLPKAARFAGLWVRRARMQWDSVKQELERELEAEELKRSLQDVQASLREAEDQLRNKQQQVEQGARALHDDVSRDIDIRSSATPVATPLELAHADLSASAHVDAAAGAAAGAGPAPAPAAPVIAQAQPIAPAPHQTLVPAPHDTIVPAPHAAHLTSAPAPPVTVAPVDAGTSASPTPSEPTKIQEKQP</sequence>
<evidence type="ECO:0000255" key="1">
    <source>
        <dbReference type="HAMAP-Rule" id="MF_00237"/>
    </source>
</evidence>
<evidence type="ECO:0000256" key="2">
    <source>
        <dbReference type="SAM" id="MobiDB-lite"/>
    </source>
</evidence>
<gene>
    <name evidence="1" type="primary">tatB</name>
    <name type="ordered locus">XOO4151</name>
</gene>
<feature type="chain" id="PRO_0000301250" description="Sec-independent protein translocase protein TatB">
    <location>
        <begin position="1"/>
        <end position="211"/>
    </location>
</feature>
<feature type="transmembrane region" description="Helical" evidence="1">
    <location>
        <begin position="1"/>
        <end position="21"/>
    </location>
</feature>
<feature type="region of interest" description="Disordered" evidence="2">
    <location>
        <begin position="175"/>
        <end position="211"/>
    </location>
</feature>
<feature type="compositionally biased region" description="Polar residues" evidence="2">
    <location>
        <begin position="194"/>
        <end position="204"/>
    </location>
</feature>
<organism>
    <name type="scientific">Xanthomonas oryzae pv. oryzae (strain MAFF 311018)</name>
    <dbReference type="NCBI Taxonomy" id="342109"/>
    <lineage>
        <taxon>Bacteria</taxon>
        <taxon>Pseudomonadati</taxon>
        <taxon>Pseudomonadota</taxon>
        <taxon>Gammaproteobacteria</taxon>
        <taxon>Lysobacterales</taxon>
        <taxon>Lysobacteraceae</taxon>
        <taxon>Xanthomonas</taxon>
    </lineage>
</organism>
<reference key="1">
    <citation type="journal article" date="2005" name="Jpn. Agric. Res. Q.">
        <title>Genome sequence of Xanthomonas oryzae pv. oryzae suggests contribution of large numbers of effector genes and insertion sequences to its race diversity.</title>
        <authorList>
            <person name="Ochiai H."/>
            <person name="Inoue Y."/>
            <person name="Takeya M."/>
            <person name="Sasaki A."/>
            <person name="Kaku H."/>
        </authorList>
    </citation>
    <scope>NUCLEOTIDE SEQUENCE [LARGE SCALE GENOMIC DNA]</scope>
    <source>
        <strain>MAFF 311018</strain>
    </source>
</reference>
<protein>
    <recommendedName>
        <fullName evidence="1">Sec-independent protein translocase protein TatB</fullName>
    </recommendedName>
</protein>
<keyword id="KW-0997">Cell inner membrane</keyword>
<keyword id="KW-1003">Cell membrane</keyword>
<keyword id="KW-0472">Membrane</keyword>
<keyword id="KW-0653">Protein transport</keyword>
<keyword id="KW-0811">Translocation</keyword>
<keyword id="KW-0812">Transmembrane</keyword>
<keyword id="KW-1133">Transmembrane helix</keyword>
<keyword id="KW-0813">Transport</keyword>
<comment type="function">
    <text evidence="1">Part of the twin-arginine translocation (Tat) system that transports large folded proteins containing a characteristic twin-arginine motif in their signal peptide across membranes. Together with TatC, TatB is part of a receptor directly interacting with Tat signal peptides. TatB may form an oligomeric binding site that transiently accommodates folded Tat precursor proteins before their translocation.</text>
</comment>
<comment type="subunit">
    <text evidence="1">The Tat system comprises two distinct complexes: a TatABC complex, containing multiple copies of TatA, TatB and TatC subunits, and a separate TatA complex, containing only TatA subunits. Substrates initially bind to the TatABC complex, which probably triggers association of the separate TatA complex to form the active translocon.</text>
</comment>
<comment type="subcellular location">
    <subcellularLocation>
        <location evidence="1">Cell inner membrane</location>
        <topology evidence="1">Single-pass membrane protein</topology>
    </subcellularLocation>
</comment>
<comment type="similarity">
    <text evidence="1">Belongs to the TatB family.</text>
</comment>